<comment type="interaction">
    <interactant intactId="EBI-17953245">
        <id>Q6UXG8-3</id>
    </interactant>
    <interactant intactId="EBI-10225815">
        <id>Q08AM2</id>
        <label>ADAM33</label>
    </interactant>
    <organismsDiffer>false</organismsDiffer>
    <experiments>3</experiments>
</comment>
<comment type="interaction">
    <interactant intactId="EBI-17953245">
        <id>Q6UXG8-3</id>
    </interactant>
    <interactant intactId="EBI-10827839">
        <id>Q15848</id>
        <label>ADIPOQ</label>
    </interactant>
    <organismsDiffer>false</organismsDiffer>
    <experiments>3</experiments>
</comment>
<comment type="interaction">
    <interactant intactId="EBI-17953245">
        <id>Q6UXG8-3</id>
    </interactant>
    <interactant intactId="EBI-3911467">
        <id>Q07325</id>
        <label>CXCL9</label>
    </interactant>
    <organismsDiffer>false</organismsDiffer>
    <experiments>3</experiments>
</comment>
<comment type="interaction">
    <interactant intactId="EBI-17953245">
        <id>Q6UXG8-3</id>
    </interactant>
    <interactant intactId="EBI-1058710">
        <id>O43169</id>
        <label>CYB5B</label>
    </interactant>
    <organismsDiffer>false</organismsDiffer>
    <experiments>3</experiments>
</comment>
<comment type="interaction">
    <interactant intactId="EBI-17953245">
        <id>Q6UXG8-3</id>
    </interactant>
    <interactant intactId="EBI-17953459">
        <id>Q14507</id>
        <label>EDDM3A</label>
    </interactant>
    <organismsDiffer>false</organismsDiffer>
    <experiments>3</experiments>
</comment>
<comment type="interaction">
    <interactant intactId="EBI-17953245">
        <id>Q6UXG8-3</id>
    </interactant>
    <interactant intactId="EBI-6166686">
        <id>Q96F15</id>
        <label>GIMAP5</label>
    </interactant>
    <organismsDiffer>false</organismsDiffer>
    <experiments>3</experiments>
</comment>
<comment type="interaction">
    <interactant intactId="EBI-17953245">
        <id>Q6UXG8-3</id>
    </interactant>
    <interactant intactId="EBI-10266796">
        <id>Q8N5M9</id>
        <label>JAGN1</label>
    </interactant>
    <organismsDiffer>false</organismsDiffer>
    <experiments>3</experiments>
</comment>
<comment type="interaction">
    <interactant intactId="EBI-17953245">
        <id>Q6UXG8-3</id>
    </interactant>
    <interactant intactId="EBI-3920969">
        <id>Q6N075</id>
        <label>MFSD5</label>
    </interactant>
    <organismsDiffer>false</organismsDiffer>
    <experiments>3</experiments>
</comment>
<comment type="interaction">
    <interactant intactId="EBI-17953245">
        <id>Q6UXG8-3</id>
    </interactant>
    <interactant intactId="EBI-10317425">
        <id>Q9NZG7</id>
        <label>NINJ2</label>
    </interactant>
    <organismsDiffer>false</organismsDiffer>
    <experiments>3</experiments>
</comment>
<comment type="interaction">
    <interactant intactId="EBI-17953245">
        <id>Q6UXG8-3</id>
    </interactant>
    <interactant intactId="EBI-11721828">
        <id>Q8IY26</id>
        <label>PLPP6</label>
    </interactant>
    <organismsDiffer>false</organismsDiffer>
    <experiments>3</experiments>
</comment>
<comment type="interaction">
    <interactant intactId="EBI-17953245">
        <id>Q6UXG8-3</id>
    </interactant>
    <interactant intactId="EBI-1052363">
        <id>Q9NS64</id>
        <label>RPRM</label>
    </interactant>
    <organismsDiffer>false</organismsDiffer>
    <experiments>3</experiments>
</comment>
<comment type="interaction">
    <interactant intactId="EBI-17953245">
        <id>Q6UXG8-3</id>
    </interactant>
    <interactant intactId="EBI-10314552">
        <id>Q9NVC3</id>
        <label>SLC38A7</label>
    </interactant>
    <organismsDiffer>false</organismsDiffer>
    <experiments>3</experiments>
</comment>
<comment type="interaction">
    <interactant intactId="EBI-17953245">
        <id>Q6UXG8-3</id>
    </interactant>
    <interactant intactId="EBI-741850">
        <id>Q9BZL3</id>
        <label>SMIM3</label>
    </interactant>
    <organismsDiffer>false</organismsDiffer>
    <experiments>3</experiments>
</comment>
<comment type="interaction">
    <interactant intactId="EBI-17953245">
        <id>Q6UXG8-3</id>
    </interactant>
    <interactant intactId="EBI-13075176">
        <id>Q8N2H4</id>
        <label>SYS1</label>
    </interactant>
    <organismsDiffer>false</organismsDiffer>
    <experiments>3</experiments>
</comment>
<comment type="interaction">
    <interactant intactId="EBI-17953245">
        <id>Q6UXG8-3</id>
    </interactant>
    <interactant intactId="EBI-359977">
        <id>P01375</id>
        <label>TNF</label>
    </interactant>
    <organismsDiffer>false</organismsDiffer>
    <experiments>3</experiments>
</comment>
<comment type="interaction">
    <interactant intactId="EBI-17953245">
        <id>Q6UXG8-3</id>
    </interactant>
    <interactant intactId="EBI-10179682">
        <id>O00526</id>
        <label>UPK2</label>
    </interactant>
    <organismsDiffer>false</organismsDiffer>
    <experiments>3</experiments>
</comment>
<comment type="subcellular location">
    <subcellularLocation>
        <location evidence="1">Membrane</location>
        <topology evidence="1">Single-pass type I membrane protein</topology>
    </subcellularLocation>
</comment>
<comment type="alternative products">
    <event type="alternative splicing"/>
    <isoform>
        <id>Q6UXG8-1</id>
        <name>1</name>
        <sequence type="displayed"/>
    </isoform>
    <isoform>
        <id>Q6UXG8-2</id>
        <name>2</name>
        <sequence type="described" ref="VSP_012720 VSP_012721"/>
    </isoform>
    <isoform>
        <id>Q6UXG8-3</id>
        <name>3</name>
        <sequence type="described" ref="VSP_012722 VSP_012723"/>
    </isoform>
</comment>
<comment type="similarity">
    <text evidence="8">Belongs to the immunoglobulin superfamily. BTN/MOG family.</text>
</comment>
<accession>Q6UXG8</accession>
<accession>A6NL42</accession>
<accession>Q6P660</accession>
<accession>Q96DM5</accession>
<protein>
    <recommendedName>
        <fullName>Butyrophilin-like protein 9</fullName>
    </recommendedName>
</protein>
<name>BTNL9_HUMAN</name>
<feature type="signal peptide" evidence="2">
    <location>
        <begin position="1"/>
        <end position="34"/>
    </location>
</feature>
<feature type="chain" id="PRO_0000014542" description="Butyrophilin-like protein 9">
    <location>
        <begin position="35"/>
        <end position="535"/>
    </location>
</feature>
<feature type="topological domain" description="Extracellular" evidence="2">
    <location>
        <begin position="35"/>
        <end position="256"/>
    </location>
</feature>
<feature type="transmembrane region" description="Helical" evidence="2">
    <location>
        <begin position="257"/>
        <end position="277"/>
    </location>
</feature>
<feature type="topological domain" description="Cytoplasmic" evidence="2">
    <location>
        <begin position="278"/>
        <end position="535"/>
    </location>
</feature>
<feature type="domain" description="Ig-like V-type">
    <location>
        <begin position="54"/>
        <end position="135"/>
    </location>
</feature>
<feature type="domain" description="B30.2/SPRY" evidence="4">
    <location>
        <begin position="310"/>
        <end position="509"/>
    </location>
</feature>
<feature type="region of interest" description="Disordered" evidence="5">
    <location>
        <begin position="340"/>
        <end position="367"/>
    </location>
</feature>
<feature type="coiled-coil region" evidence="2">
    <location>
        <begin position="276"/>
        <end position="315"/>
    </location>
</feature>
<feature type="glycosylation site" description="N-linked (GlcNAc...) asparagine" evidence="2">
    <location>
        <position position="102"/>
    </location>
</feature>
<feature type="glycosylation site" description="N-linked (GlcNAc...) asparagine" evidence="2">
    <location>
        <position position="139"/>
    </location>
</feature>
<feature type="glycosylation site" description="N-linked (GlcNAc...) asparagine" evidence="2">
    <location>
        <position position="224"/>
    </location>
</feature>
<feature type="disulfide bond" evidence="3">
    <location>
        <begin position="59"/>
        <end position="133"/>
    </location>
</feature>
<feature type="splice variant" id="VSP_012720" description="In isoform 2." evidence="6">
    <original>EKLTAELEKLQTELDWRRAE</original>
    <variation>GERGQGVLHAPAQVPKPAVI</variation>
    <location>
        <begin position="296"/>
        <end position="315"/>
    </location>
</feature>
<feature type="splice variant" id="VSP_012721" description="In isoform 2." evidence="6">
    <location>
        <begin position="316"/>
        <end position="535"/>
    </location>
</feature>
<feature type="splice variant" id="VSP_012722" description="In isoform 3." evidence="7">
    <original>WRAAQKYAVDVTLDPASAHPSLEVS</original>
    <variation>CFVLASHPPGEGIQAASNSTTTLNA</variation>
    <location>
        <begin position="320"/>
        <end position="344"/>
    </location>
</feature>
<feature type="splice variant" id="VSP_012723" description="In isoform 3." evidence="7">
    <location>
        <begin position="345"/>
        <end position="535"/>
    </location>
</feature>
<feature type="sequence variant" id="VAR_049841" description="In dbSNP:rs10068763.">
    <original>G</original>
    <variation>R</variation>
    <location>
        <position position="511"/>
    </location>
</feature>
<proteinExistence type="evidence at protein level"/>
<evidence type="ECO:0000250" key="1"/>
<evidence type="ECO:0000255" key="2"/>
<evidence type="ECO:0000255" key="3">
    <source>
        <dbReference type="PROSITE-ProRule" id="PRU00114"/>
    </source>
</evidence>
<evidence type="ECO:0000255" key="4">
    <source>
        <dbReference type="PROSITE-ProRule" id="PRU00548"/>
    </source>
</evidence>
<evidence type="ECO:0000256" key="5">
    <source>
        <dbReference type="SAM" id="MobiDB-lite"/>
    </source>
</evidence>
<evidence type="ECO:0000303" key="6">
    <source>
    </source>
</evidence>
<evidence type="ECO:0000303" key="7">
    <source>
    </source>
</evidence>
<evidence type="ECO:0000305" key="8"/>
<sequence length="535" mass="59716">MVDLSVSPDSLKPVSLTSSLVFLMHLLLLQPGEPSSEVKVLGPEYPILALVGEEVEFPCHLWPQLDAQQMEIRWFRSQTFNVVHLYQEQQELPGRQMPAFRNRTKLVKDDIAYGSVVLQLHSIIPSDKGTYGCRFHSDNFSGEALWELEVAGLGSDPHLSLEGFKEGGIQLRLRSSGWYPKPKVQWRDHQGQCLPPEFEAIVWDAQDLFSLETSVVVRAGALSNVSVSIQNLLLSQKKELVVQIADVFVPGASAWKSAFVATLPLLLVLAALALGVLRKQRRSREKLRKQAEKRQEKLTAELEKLQTELDWRRAEGQAEWRAAQKYAVDVTLDPASAHPSLEVSEDGKSVSSRGAPPGPAPGHPQRFSEQTCALSLERFSAGRHYWEVHVGRRSRWFLGACLAAVPRAGPARLSPAAGYWVLGLWNGCEYFVLAPHRVALTLRVPPRRLGVFLDYEAGELSFFNVSDGSHIFTFHDTFSGALCAYFRPRAHDGGEHPDPLTICPLPVRGTGVPEENDSDTWLQPYEPADPALDWW</sequence>
<reference key="1">
    <citation type="journal article" date="2003" name="Genome Res.">
        <title>The secreted protein discovery initiative (SPDI), a large-scale effort to identify novel human secreted and transmembrane proteins: a bioinformatics assessment.</title>
        <authorList>
            <person name="Clark H.F."/>
            <person name="Gurney A.L."/>
            <person name="Abaya E."/>
            <person name="Baker K."/>
            <person name="Baldwin D.T."/>
            <person name="Brush J."/>
            <person name="Chen J."/>
            <person name="Chow B."/>
            <person name="Chui C."/>
            <person name="Crowley C."/>
            <person name="Currell B."/>
            <person name="Deuel B."/>
            <person name="Dowd P."/>
            <person name="Eaton D."/>
            <person name="Foster J.S."/>
            <person name="Grimaldi C."/>
            <person name="Gu Q."/>
            <person name="Hass P.E."/>
            <person name="Heldens S."/>
            <person name="Huang A."/>
            <person name="Kim H.S."/>
            <person name="Klimowski L."/>
            <person name="Jin Y."/>
            <person name="Johnson S."/>
            <person name="Lee J."/>
            <person name="Lewis L."/>
            <person name="Liao D."/>
            <person name="Mark M.R."/>
            <person name="Robbie E."/>
            <person name="Sanchez C."/>
            <person name="Schoenfeld J."/>
            <person name="Seshagiri S."/>
            <person name="Simmons L."/>
            <person name="Singh J."/>
            <person name="Smith V."/>
            <person name="Stinson J."/>
            <person name="Vagts A."/>
            <person name="Vandlen R.L."/>
            <person name="Watanabe C."/>
            <person name="Wieand D."/>
            <person name="Woods K."/>
            <person name="Xie M.-H."/>
            <person name="Yansura D.G."/>
            <person name="Yi S."/>
            <person name="Yu G."/>
            <person name="Yuan J."/>
            <person name="Zhang M."/>
            <person name="Zhang Z."/>
            <person name="Goddard A.D."/>
            <person name="Wood W.I."/>
            <person name="Godowski P.J."/>
            <person name="Gray A.M."/>
        </authorList>
    </citation>
    <scope>NUCLEOTIDE SEQUENCE [LARGE SCALE MRNA] (ISOFORM 1)</scope>
</reference>
<reference key="2">
    <citation type="journal article" date="2004" name="Nat. Genet.">
        <title>Complete sequencing and characterization of 21,243 full-length human cDNAs.</title>
        <authorList>
            <person name="Ota T."/>
            <person name="Suzuki Y."/>
            <person name="Nishikawa T."/>
            <person name="Otsuki T."/>
            <person name="Sugiyama T."/>
            <person name="Irie R."/>
            <person name="Wakamatsu A."/>
            <person name="Hayashi K."/>
            <person name="Sato H."/>
            <person name="Nagai K."/>
            <person name="Kimura K."/>
            <person name="Makita H."/>
            <person name="Sekine M."/>
            <person name="Obayashi M."/>
            <person name="Nishi T."/>
            <person name="Shibahara T."/>
            <person name="Tanaka T."/>
            <person name="Ishii S."/>
            <person name="Yamamoto J."/>
            <person name="Saito K."/>
            <person name="Kawai Y."/>
            <person name="Isono Y."/>
            <person name="Nakamura Y."/>
            <person name="Nagahari K."/>
            <person name="Murakami K."/>
            <person name="Yasuda T."/>
            <person name="Iwayanagi T."/>
            <person name="Wagatsuma M."/>
            <person name="Shiratori A."/>
            <person name="Sudo H."/>
            <person name="Hosoiri T."/>
            <person name="Kaku Y."/>
            <person name="Kodaira H."/>
            <person name="Kondo H."/>
            <person name="Sugawara M."/>
            <person name="Takahashi M."/>
            <person name="Kanda K."/>
            <person name="Yokoi T."/>
            <person name="Furuya T."/>
            <person name="Kikkawa E."/>
            <person name="Omura Y."/>
            <person name="Abe K."/>
            <person name="Kamihara K."/>
            <person name="Katsuta N."/>
            <person name="Sato K."/>
            <person name="Tanikawa M."/>
            <person name="Yamazaki M."/>
            <person name="Ninomiya K."/>
            <person name="Ishibashi T."/>
            <person name="Yamashita H."/>
            <person name="Murakawa K."/>
            <person name="Fujimori K."/>
            <person name="Tanai H."/>
            <person name="Kimata M."/>
            <person name="Watanabe M."/>
            <person name="Hiraoka S."/>
            <person name="Chiba Y."/>
            <person name="Ishida S."/>
            <person name="Ono Y."/>
            <person name="Takiguchi S."/>
            <person name="Watanabe S."/>
            <person name="Yosida M."/>
            <person name="Hotuta T."/>
            <person name="Kusano J."/>
            <person name="Kanehori K."/>
            <person name="Takahashi-Fujii A."/>
            <person name="Hara H."/>
            <person name="Tanase T.-O."/>
            <person name="Nomura Y."/>
            <person name="Togiya S."/>
            <person name="Komai F."/>
            <person name="Hara R."/>
            <person name="Takeuchi K."/>
            <person name="Arita M."/>
            <person name="Imose N."/>
            <person name="Musashino K."/>
            <person name="Yuuki H."/>
            <person name="Oshima A."/>
            <person name="Sasaki N."/>
            <person name="Aotsuka S."/>
            <person name="Yoshikawa Y."/>
            <person name="Matsunawa H."/>
            <person name="Ichihara T."/>
            <person name="Shiohata N."/>
            <person name="Sano S."/>
            <person name="Moriya S."/>
            <person name="Momiyama H."/>
            <person name="Satoh N."/>
            <person name="Takami S."/>
            <person name="Terashima Y."/>
            <person name="Suzuki O."/>
            <person name="Nakagawa S."/>
            <person name="Senoh A."/>
            <person name="Mizoguchi H."/>
            <person name="Goto Y."/>
            <person name="Shimizu F."/>
            <person name="Wakebe H."/>
            <person name="Hishigaki H."/>
            <person name="Watanabe T."/>
            <person name="Sugiyama A."/>
            <person name="Takemoto M."/>
            <person name="Kawakami B."/>
            <person name="Yamazaki M."/>
            <person name="Watanabe K."/>
            <person name="Kumagai A."/>
            <person name="Itakura S."/>
            <person name="Fukuzumi Y."/>
            <person name="Fujimori Y."/>
            <person name="Komiyama M."/>
            <person name="Tashiro H."/>
            <person name="Tanigami A."/>
            <person name="Fujiwara T."/>
            <person name="Ono T."/>
            <person name="Yamada K."/>
            <person name="Fujii Y."/>
            <person name="Ozaki K."/>
            <person name="Hirao M."/>
            <person name="Ohmori Y."/>
            <person name="Kawabata A."/>
            <person name="Hikiji T."/>
            <person name="Kobatake N."/>
            <person name="Inagaki H."/>
            <person name="Ikema Y."/>
            <person name="Okamoto S."/>
            <person name="Okitani R."/>
            <person name="Kawakami T."/>
            <person name="Noguchi S."/>
            <person name="Itoh T."/>
            <person name="Shigeta K."/>
            <person name="Senba T."/>
            <person name="Matsumura K."/>
            <person name="Nakajima Y."/>
            <person name="Mizuno T."/>
            <person name="Morinaga M."/>
            <person name="Sasaki M."/>
            <person name="Togashi T."/>
            <person name="Oyama M."/>
            <person name="Hata H."/>
            <person name="Watanabe M."/>
            <person name="Komatsu T."/>
            <person name="Mizushima-Sugano J."/>
            <person name="Satoh T."/>
            <person name="Shirai Y."/>
            <person name="Takahashi Y."/>
            <person name="Nakagawa K."/>
            <person name="Okumura K."/>
            <person name="Nagase T."/>
            <person name="Nomura N."/>
            <person name="Kikuchi H."/>
            <person name="Masuho Y."/>
            <person name="Yamashita R."/>
            <person name="Nakai K."/>
            <person name="Yada T."/>
            <person name="Nakamura Y."/>
            <person name="Ohara O."/>
            <person name="Isogai T."/>
            <person name="Sugano S."/>
        </authorList>
    </citation>
    <scope>NUCLEOTIDE SEQUENCE [LARGE SCALE MRNA] (ISOFORM 2)</scope>
    <source>
        <tissue>Small intestine</tissue>
    </source>
</reference>
<reference key="3">
    <citation type="journal article" date="2004" name="Nature">
        <title>The DNA sequence and comparative analysis of human chromosome 5.</title>
        <authorList>
            <person name="Schmutz J."/>
            <person name="Martin J."/>
            <person name="Terry A."/>
            <person name="Couronne O."/>
            <person name="Grimwood J."/>
            <person name="Lowry S."/>
            <person name="Gordon L.A."/>
            <person name="Scott D."/>
            <person name="Xie G."/>
            <person name="Huang W."/>
            <person name="Hellsten U."/>
            <person name="Tran-Gyamfi M."/>
            <person name="She X."/>
            <person name="Prabhakar S."/>
            <person name="Aerts A."/>
            <person name="Altherr M."/>
            <person name="Bajorek E."/>
            <person name="Black S."/>
            <person name="Branscomb E."/>
            <person name="Caoile C."/>
            <person name="Challacombe J.F."/>
            <person name="Chan Y.M."/>
            <person name="Denys M."/>
            <person name="Detter J.C."/>
            <person name="Escobar J."/>
            <person name="Flowers D."/>
            <person name="Fotopulos D."/>
            <person name="Glavina T."/>
            <person name="Gomez M."/>
            <person name="Gonzales E."/>
            <person name="Goodstein D."/>
            <person name="Grigoriev I."/>
            <person name="Groza M."/>
            <person name="Hammon N."/>
            <person name="Hawkins T."/>
            <person name="Haydu L."/>
            <person name="Israni S."/>
            <person name="Jett J."/>
            <person name="Kadner K."/>
            <person name="Kimball H."/>
            <person name="Kobayashi A."/>
            <person name="Lopez F."/>
            <person name="Lou Y."/>
            <person name="Martinez D."/>
            <person name="Medina C."/>
            <person name="Morgan J."/>
            <person name="Nandkeshwar R."/>
            <person name="Noonan J.P."/>
            <person name="Pitluck S."/>
            <person name="Pollard M."/>
            <person name="Predki P."/>
            <person name="Priest J."/>
            <person name="Ramirez L."/>
            <person name="Retterer J."/>
            <person name="Rodriguez A."/>
            <person name="Rogers S."/>
            <person name="Salamov A."/>
            <person name="Salazar A."/>
            <person name="Thayer N."/>
            <person name="Tice H."/>
            <person name="Tsai M."/>
            <person name="Ustaszewska A."/>
            <person name="Vo N."/>
            <person name="Wheeler J."/>
            <person name="Wu K."/>
            <person name="Yang J."/>
            <person name="Dickson M."/>
            <person name="Cheng J.-F."/>
            <person name="Eichler E.E."/>
            <person name="Olsen A."/>
            <person name="Pennacchio L.A."/>
            <person name="Rokhsar D.S."/>
            <person name="Richardson P."/>
            <person name="Lucas S.M."/>
            <person name="Myers R.M."/>
            <person name="Rubin E.M."/>
        </authorList>
    </citation>
    <scope>NUCLEOTIDE SEQUENCE [LARGE SCALE GENOMIC DNA]</scope>
</reference>
<reference key="4">
    <citation type="submission" date="2005-09" db="EMBL/GenBank/DDBJ databases">
        <authorList>
            <person name="Mural R.J."/>
            <person name="Istrail S."/>
            <person name="Sutton G.G."/>
            <person name="Florea L."/>
            <person name="Halpern A.L."/>
            <person name="Mobarry C.M."/>
            <person name="Lippert R."/>
            <person name="Walenz B."/>
            <person name="Shatkay H."/>
            <person name="Dew I."/>
            <person name="Miller J.R."/>
            <person name="Flanigan M.J."/>
            <person name="Edwards N.J."/>
            <person name="Bolanos R."/>
            <person name="Fasulo D."/>
            <person name="Halldorsson B.V."/>
            <person name="Hannenhalli S."/>
            <person name="Turner R."/>
            <person name="Yooseph S."/>
            <person name="Lu F."/>
            <person name="Nusskern D.R."/>
            <person name="Shue B.C."/>
            <person name="Zheng X.H."/>
            <person name="Zhong F."/>
            <person name="Delcher A.L."/>
            <person name="Huson D.H."/>
            <person name="Kravitz S.A."/>
            <person name="Mouchard L."/>
            <person name="Reinert K."/>
            <person name="Remington K.A."/>
            <person name="Clark A.G."/>
            <person name="Waterman M.S."/>
            <person name="Eichler E.E."/>
            <person name="Adams M.D."/>
            <person name="Hunkapiller M.W."/>
            <person name="Myers E.W."/>
            <person name="Venter J.C."/>
        </authorList>
    </citation>
    <scope>NUCLEOTIDE SEQUENCE [LARGE SCALE GENOMIC DNA]</scope>
</reference>
<reference key="5">
    <citation type="journal article" date="2004" name="Genome Res.">
        <title>The status, quality, and expansion of the NIH full-length cDNA project: the Mammalian Gene Collection (MGC).</title>
        <authorList>
            <consortium name="The MGC Project Team"/>
        </authorList>
    </citation>
    <scope>NUCLEOTIDE SEQUENCE [LARGE SCALE MRNA] (ISOFORM 3)</scope>
    <source>
        <tissue>PNS</tissue>
    </source>
</reference>
<gene>
    <name type="primary">BTNL9</name>
    <name type="ORF">UNQ1900/PRO4346</name>
</gene>
<dbReference type="EMBL" id="AY358358">
    <property type="protein sequence ID" value="AAQ88724.1"/>
    <property type="molecule type" value="mRNA"/>
</dbReference>
<dbReference type="EMBL" id="AK057097">
    <property type="protein sequence ID" value="BAB71365.1"/>
    <property type="molecule type" value="mRNA"/>
</dbReference>
<dbReference type="EMBL" id="AC008620">
    <property type="status" value="NOT_ANNOTATED_CDS"/>
    <property type="molecule type" value="Genomic_DNA"/>
</dbReference>
<dbReference type="EMBL" id="AC091874">
    <property type="status" value="NOT_ANNOTATED_CDS"/>
    <property type="molecule type" value="Genomic_DNA"/>
</dbReference>
<dbReference type="EMBL" id="CH471165">
    <property type="protein sequence ID" value="EAW53724.1"/>
    <property type="molecule type" value="Genomic_DNA"/>
</dbReference>
<dbReference type="EMBL" id="BC062459">
    <property type="protein sequence ID" value="AAH62459.1"/>
    <property type="molecule type" value="mRNA"/>
</dbReference>
<dbReference type="CCDS" id="CCDS4460.2">
    <molecule id="Q6UXG8-1"/>
</dbReference>
<dbReference type="CCDS" id="CCDS78104.1">
    <molecule id="Q6UXG8-3"/>
</dbReference>
<dbReference type="RefSeq" id="NP_001295174.1">
    <molecule id="Q6UXG8-3"/>
    <property type="nucleotide sequence ID" value="NM_001308245.2"/>
</dbReference>
<dbReference type="RefSeq" id="NP_689760.2">
    <molecule id="Q6UXG8-1"/>
    <property type="nucleotide sequence ID" value="NM_152547.5"/>
</dbReference>
<dbReference type="RefSeq" id="XP_011532746.1">
    <molecule id="Q6UXG8-3"/>
    <property type="nucleotide sequence ID" value="XM_011534444.4"/>
</dbReference>
<dbReference type="RefSeq" id="XP_054207786.1">
    <molecule id="Q6UXG8-3"/>
    <property type="nucleotide sequence ID" value="XM_054351811.1"/>
</dbReference>
<dbReference type="SMR" id="Q6UXG8"/>
<dbReference type="BioGRID" id="127506">
    <property type="interactions" value="162"/>
</dbReference>
<dbReference type="FunCoup" id="Q6UXG8">
    <property type="interactions" value="636"/>
</dbReference>
<dbReference type="IntAct" id="Q6UXG8">
    <property type="interactions" value="152"/>
</dbReference>
<dbReference type="STRING" id="9606.ENSP00000330200"/>
<dbReference type="GlyCosmos" id="Q6UXG8">
    <property type="glycosylation" value="3 sites, No reported glycans"/>
</dbReference>
<dbReference type="GlyGen" id="Q6UXG8">
    <property type="glycosylation" value="3 sites, 2 N-linked glycans (1 site)"/>
</dbReference>
<dbReference type="iPTMnet" id="Q6UXG8"/>
<dbReference type="PhosphoSitePlus" id="Q6UXG8"/>
<dbReference type="BioMuta" id="BTNL9"/>
<dbReference type="DMDM" id="67462192"/>
<dbReference type="MassIVE" id="Q6UXG8"/>
<dbReference type="PaxDb" id="9606-ENSP00000330200"/>
<dbReference type="PeptideAtlas" id="Q6UXG8"/>
<dbReference type="ProteomicsDB" id="67612">
    <molecule id="Q6UXG8-1"/>
</dbReference>
<dbReference type="ProteomicsDB" id="67613">
    <molecule id="Q6UXG8-2"/>
</dbReference>
<dbReference type="ProteomicsDB" id="67614">
    <molecule id="Q6UXG8-3"/>
</dbReference>
<dbReference type="Antibodypedia" id="51014">
    <property type="antibodies" value="85 antibodies from 16 providers"/>
</dbReference>
<dbReference type="DNASU" id="153579"/>
<dbReference type="Ensembl" id="ENST00000327705.14">
    <molecule id="Q6UXG8-1"/>
    <property type="protein sequence ID" value="ENSP00000330200.9"/>
    <property type="gene ID" value="ENSG00000165810.17"/>
</dbReference>
<dbReference type="Ensembl" id="ENST00000376841.6">
    <molecule id="Q6UXG8-3"/>
    <property type="protein sequence ID" value="ENSP00000366037.2"/>
    <property type="gene ID" value="ENSG00000165810.17"/>
</dbReference>
<dbReference type="Ensembl" id="ENST00000491209.5">
    <molecule id="Q6UXG8-2"/>
    <property type="protein sequence ID" value="ENSP00000425424.1"/>
    <property type="gene ID" value="ENSG00000165810.17"/>
</dbReference>
<dbReference type="GeneID" id="153579"/>
<dbReference type="KEGG" id="hsa:153579"/>
<dbReference type="MANE-Select" id="ENST00000327705.14">
    <property type="protein sequence ID" value="ENSP00000330200.9"/>
    <property type="RefSeq nucleotide sequence ID" value="NM_152547.5"/>
    <property type="RefSeq protein sequence ID" value="NP_689760.2"/>
</dbReference>
<dbReference type="UCSC" id="uc003mmt.3">
    <molecule id="Q6UXG8-1"/>
    <property type="organism name" value="human"/>
</dbReference>
<dbReference type="AGR" id="HGNC:24176"/>
<dbReference type="CTD" id="153579"/>
<dbReference type="DisGeNET" id="153579"/>
<dbReference type="GeneCards" id="BTNL9"/>
<dbReference type="HGNC" id="HGNC:24176">
    <property type="gene designation" value="BTNL9"/>
</dbReference>
<dbReference type="HPA" id="ENSG00000165810">
    <property type="expression patterns" value="Tissue enhanced (adipose tissue, breast)"/>
</dbReference>
<dbReference type="MIM" id="620648">
    <property type="type" value="gene"/>
</dbReference>
<dbReference type="neXtProt" id="NX_Q6UXG8"/>
<dbReference type="OpenTargets" id="ENSG00000165810"/>
<dbReference type="PharmGKB" id="PA134945306"/>
<dbReference type="VEuPathDB" id="HostDB:ENSG00000165810"/>
<dbReference type="eggNOG" id="KOG2177">
    <property type="taxonomic scope" value="Eukaryota"/>
</dbReference>
<dbReference type="GeneTree" id="ENSGT00940000160338"/>
<dbReference type="HOGENOM" id="CLU_013137_22_0_1"/>
<dbReference type="InParanoid" id="Q6UXG8"/>
<dbReference type="OMA" id="WEVHVGC"/>
<dbReference type="OrthoDB" id="10055806at2759"/>
<dbReference type="PAN-GO" id="Q6UXG8">
    <property type="GO annotations" value="4 GO annotations based on evolutionary models"/>
</dbReference>
<dbReference type="PhylomeDB" id="Q6UXG8"/>
<dbReference type="TreeFam" id="TF317532"/>
<dbReference type="PathwayCommons" id="Q6UXG8"/>
<dbReference type="Reactome" id="R-HSA-8851680">
    <property type="pathway name" value="Butyrophilin (BTN) family interactions"/>
</dbReference>
<dbReference type="SignaLink" id="Q6UXG8"/>
<dbReference type="BioGRID-ORCS" id="153579">
    <property type="hits" value="11 hits in 1153 CRISPR screens"/>
</dbReference>
<dbReference type="ChiTaRS" id="BTNL9">
    <property type="organism name" value="human"/>
</dbReference>
<dbReference type="GenomeRNAi" id="153579"/>
<dbReference type="Pharos" id="Q6UXG8">
    <property type="development level" value="Tbio"/>
</dbReference>
<dbReference type="PRO" id="PR:Q6UXG8"/>
<dbReference type="Proteomes" id="UP000005640">
    <property type="component" value="Chromosome 5"/>
</dbReference>
<dbReference type="RNAct" id="Q6UXG8">
    <property type="molecule type" value="protein"/>
</dbReference>
<dbReference type="Bgee" id="ENSG00000165810">
    <property type="expression patterns" value="Expressed in right lung and 171 other cell types or tissues"/>
</dbReference>
<dbReference type="ExpressionAtlas" id="Q6UXG8">
    <property type="expression patterns" value="baseline and differential"/>
</dbReference>
<dbReference type="GO" id="GO:0009897">
    <property type="term" value="C:external side of plasma membrane"/>
    <property type="evidence" value="ECO:0000318"/>
    <property type="project" value="GO_Central"/>
</dbReference>
<dbReference type="GO" id="GO:0005886">
    <property type="term" value="C:plasma membrane"/>
    <property type="evidence" value="ECO:0000304"/>
    <property type="project" value="Reactome"/>
</dbReference>
<dbReference type="GO" id="GO:0005102">
    <property type="term" value="F:signaling receptor binding"/>
    <property type="evidence" value="ECO:0000318"/>
    <property type="project" value="GO_Central"/>
</dbReference>
<dbReference type="GO" id="GO:0001817">
    <property type="term" value="P:regulation of cytokine production"/>
    <property type="evidence" value="ECO:0000318"/>
    <property type="project" value="GO_Central"/>
</dbReference>
<dbReference type="GO" id="GO:0050852">
    <property type="term" value="P:T cell receptor signaling pathway"/>
    <property type="evidence" value="ECO:0000318"/>
    <property type="project" value="GO_Central"/>
</dbReference>
<dbReference type="CDD" id="cd05713">
    <property type="entry name" value="IgV_MOG_like"/>
    <property type="match status" value="1"/>
</dbReference>
<dbReference type="CDD" id="cd13733">
    <property type="entry name" value="SPRY_PRY_C-I_1"/>
    <property type="match status" value="1"/>
</dbReference>
<dbReference type="FunFam" id="2.60.120.920:FF:000004">
    <property type="entry name" value="Butyrophilin subfamily 1 member A1"/>
    <property type="match status" value="1"/>
</dbReference>
<dbReference type="FunFam" id="2.60.40.10:FF:000088">
    <property type="entry name" value="Butyrophilin subfamily 1 member A1"/>
    <property type="match status" value="1"/>
</dbReference>
<dbReference type="FunFam" id="2.60.40.10:FF:000208">
    <property type="entry name" value="Butyrophilin subfamily 1 member A1"/>
    <property type="match status" value="1"/>
</dbReference>
<dbReference type="Gene3D" id="2.60.120.920">
    <property type="match status" value="1"/>
</dbReference>
<dbReference type="Gene3D" id="2.60.40.10">
    <property type="entry name" value="Immunoglobulins"/>
    <property type="match status" value="2"/>
</dbReference>
<dbReference type="InterPro" id="IPR001870">
    <property type="entry name" value="B30.2/SPRY"/>
</dbReference>
<dbReference type="InterPro" id="IPR043136">
    <property type="entry name" value="B30.2/SPRY_sf"/>
</dbReference>
<dbReference type="InterPro" id="IPR053896">
    <property type="entry name" value="BTN3A2-like_Ig-C"/>
</dbReference>
<dbReference type="InterPro" id="IPR003879">
    <property type="entry name" value="Butyrophylin_SPRY"/>
</dbReference>
<dbReference type="InterPro" id="IPR013320">
    <property type="entry name" value="ConA-like_dom_sf"/>
</dbReference>
<dbReference type="InterPro" id="IPR007110">
    <property type="entry name" value="Ig-like_dom"/>
</dbReference>
<dbReference type="InterPro" id="IPR036179">
    <property type="entry name" value="Ig-like_dom_sf"/>
</dbReference>
<dbReference type="InterPro" id="IPR013783">
    <property type="entry name" value="Ig-like_fold"/>
</dbReference>
<dbReference type="InterPro" id="IPR003599">
    <property type="entry name" value="Ig_sub"/>
</dbReference>
<dbReference type="InterPro" id="IPR013106">
    <property type="entry name" value="Ig_V-set"/>
</dbReference>
<dbReference type="InterPro" id="IPR050504">
    <property type="entry name" value="IgSF_BTN/MOG"/>
</dbReference>
<dbReference type="InterPro" id="IPR006574">
    <property type="entry name" value="PRY"/>
</dbReference>
<dbReference type="InterPro" id="IPR003877">
    <property type="entry name" value="SPRY_dom"/>
</dbReference>
<dbReference type="PANTHER" id="PTHR24100">
    <property type="entry name" value="BUTYROPHILIN"/>
    <property type="match status" value="1"/>
</dbReference>
<dbReference type="PANTHER" id="PTHR24100:SF130">
    <property type="entry name" value="BUTYROPHILIN-LIKE PROTEIN 9"/>
    <property type="match status" value="1"/>
</dbReference>
<dbReference type="Pfam" id="PF22705">
    <property type="entry name" value="C2-set_3"/>
    <property type="match status" value="1"/>
</dbReference>
<dbReference type="Pfam" id="PF13765">
    <property type="entry name" value="PRY"/>
    <property type="match status" value="1"/>
</dbReference>
<dbReference type="Pfam" id="PF00622">
    <property type="entry name" value="SPRY"/>
    <property type="match status" value="1"/>
</dbReference>
<dbReference type="Pfam" id="PF07686">
    <property type="entry name" value="V-set"/>
    <property type="match status" value="1"/>
</dbReference>
<dbReference type="PRINTS" id="PR01407">
    <property type="entry name" value="BUTYPHLNCDUF"/>
</dbReference>
<dbReference type="SMART" id="SM00409">
    <property type="entry name" value="IG"/>
    <property type="match status" value="1"/>
</dbReference>
<dbReference type="SMART" id="SM00406">
    <property type="entry name" value="IGv"/>
    <property type="match status" value="1"/>
</dbReference>
<dbReference type="SMART" id="SM00589">
    <property type="entry name" value="PRY"/>
    <property type="match status" value="1"/>
</dbReference>
<dbReference type="SMART" id="SM00449">
    <property type="entry name" value="SPRY"/>
    <property type="match status" value="1"/>
</dbReference>
<dbReference type="SUPFAM" id="SSF49899">
    <property type="entry name" value="Concanavalin A-like lectins/glucanases"/>
    <property type="match status" value="1"/>
</dbReference>
<dbReference type="SUPFAM" id="SSF48726">
    <property type="entry name" value="Immunoglobulin"/>
    <property type="match status" value="1"/>
</dbReference>
<dbReference type="PROSITE" id="PS50188">
    <property type="entry name" value="B302_SPRY"/>
    <property type="match status" value="1"/>
</dbReference>
<dbReference type="PROSITE" id="PS50835">
    <property type="entry name" value="IG_LIKE"/>
    <property type="match status" value="1"/>
</dbReference>
<organism>
    <name type="scientific">Homo sapiens</name>
    <name type="common">Human</name>
    <dbReference type="NCBI Taxonomy" id="9606"/>
    <lineage>
        <taxon>Eukaryota</taxon>
        <taxon>Metazoa</taxon>
        <taxon>Chordata</taxon>
        <taxon>Craniata</taxon>
        <taxon>Vertebrata</taxon>
        <taxon>Euteleostomi</taxon>
        <taxon>Mammalia</taxon>
        <taxon>Eutheria</taxon>
        <taxon>Euarchontoglires</taxon>
        <taxon>Primates</taxon>
        <taxon>Haplorrhini</taxon>
        <taxon>Catarrhini</taxon>
        <taxon>Hominidae</taxon>
        <taxon>Homo</taxon>
    </lineage>
</organism>
<keyword id="KW-0025">Alternative splicing</keyword>
<keyword id="KW-0175">Coiled coil</keyword>
<keyword id="KW-1015">Disulfide bond</keyword>
<keyword id="KW-0325">Glycoprotein</keyword>
<keyword id="KW-0393">Immunoglobulin domain</keyword>
<keyword id="KW-0472">Membrane</keyword>
<keyword id="KW-1267">Proteomics identification</keyword>
<keyword id="KW-1185">Reference proteome</keyword>
<keyword id="KW-0732">Signal</keyword>
<keyword id="KW-0812">Transmembrane</keyword>
<keyword id="KW-1133">Transmembrane helix</keyword>